<sequence>MQLNSTEISDLIKQRIEKFNVVTEARNEGTIVSVSDGIINIHGLADVMQGEMIELPGGRYALALNLNRDSVGAVVMGPYADLQEGMKVTGTGRILEVPVGPELLGRVVNTLGEPIDGKGPIEAKLTSPVEVIAPGVIDRKSVDQPVQTGYKSVDSMIPIGRGQRELIIGDRQTGKTAMAIDAIINQKDSGIFSIYVAIGQKASTIANVVRKLEEHGALANTIVVVASASESAALQYLAPYSGCAMGEYFRDRGEDALIVYDDLSKQAVAYRQISLLLKRPPGREAFPGDVFYLHSRLLERAARVSEAYVERFTNGEVTGKTGSLTALPIIETQAGDVSAFVPTNVISITDGQIFLQTELFTAGVRPAVDPGISVSRVGGSAQTKIIKKLSGGIRTALAQYRELAAFAQFSSDLDDATKKQLDHGEKVTELMKQKQYAPMSVFDQALVIFAAEKGYLKDVELAKLADFEEALLSYARGQFADLAKEIDTSGAWNNEIEAQFVKLVEDFKATQTW</sequence>
<gene>
    <name evidence="1" type="primary">atpA</name>
    <name type="ordered locus">VF_2566</name>
</gene>
<protein>
    <recommendedName>
        <fullName evidence="1">ATP synthase subunit alpha</fullName>
        <ecNumber evidence="1">7.1.2.2</ecNumber>
    </recommendedName>
    <alternativeName>
        <fullName evidence="1">ATP synthase F1 sector subunit alpha</fullName>
    </alternativeName>
    <alternativeName>
        <fullName evidence="1">F-ATPase subunit alpha</fullName>
    </alternativeName>
</protein>
<keyword id="KW-0066">ATP synthesis</keyword>
<keyword id="KW-0067">ATP-binding</keyword>
<keyword id="KW-0997">Cell inner membrane</keyword>
<keyword id="KW-1003">Cell membrane</keyword>
<keyword id="KW-0139">CF(1)</keyword>
<keyword id="KW-0375">Hydrogen ion transport</keyword>
<keyword id="KW-0406">Ion transport</keyword>
<keyword id="KW-0472">Membrane</keyword>
<keyword id="KW-0547">Nucleotide-binding</keyword>
<keyword id="KW-1185">Reference proteome</keyword>
<keyword id="KW-1278">Translocase</keyword>
<keyword id="KW-0813">Transport</keyword>
<name>ATPA_ALIF1</name>
<comment type="function">
    <text evidence="1">Produces ATP from ADP in the presence of a proton gradient across the membrane. The alpha chain is a regulatory subunit.</text>
</comment>
<comment type="catalytic activity">
    <reaction evidence="1">
        <text>ATP + H2O + 4 H(+)(in) = ADP + phosphate + 5 H(+)(out)</text>
        <dbReference type="Rhea" id="RHEA:57720"/>
        <dbReference type="ChEBI" id="CHEBI:15377"/>
        <dbReference type="ChEBI" id="CHEBI:15378"/>
        <dbReference type="ChEBI" id="CHEBI:30616"/>
        <dbReference type="ChEBI" id="CHEBI:43474"/>
        <dbReference type="ChEBI" id="CHEBI:456216"/>
        <dbReference type="EC" id="7.1.2.2"/>
    </reaction>
</comment>
<comment type="subunit">
    <text evidence="1">F-type ATPases have 2 components, CF(1) - the catalytic core - and CF(0) - the membrane proton channel. CF(1) has five subunits: alpha(3), beta(3), gamma(1), delta(1), epsilon(1). CF(0) has three main subunits: a(1), b(2) and c(9-12). The alpha and beta chains form an alternating ring which encloses part of the gamma chain. CF(1) is attached to CF(0) by a central stalk formed by the gamma and epsilon chains, while a peripheral stalk is formed by the delta and b chains.</text>
</comment>
<comment type="subcellular location">
    <subcellularLocation>
        <location evidence="1">Cell inner membrane</location>
        <topology evidence="1">Peripheral membrane protein</topology>
    </subcellularLocation>
</comment>
<comment type="similarity">
    <text evidence="1">Belongs to the ATPase alpha/beta chains family.</text>
</comment>
<reference key="1">
    <citation type="journal article" date="2005" name="Proc. Natl. Acad. Sci. U.S.A.">
        <title>Complete genome sequence of Vibrio fischeri: a symbiotic bacterium with pathogenic congeners.</title>
        <authorList>
            <person name="Ruby E.G."/>
            <person name="Urbanowski M."/>
            <person name="Campbell J."/>
            <person name="Dunn A."/>
            <person name="Faini M."/>
            <person name="Gunsalus R."/>
            <person name="Lostroh P."/>
            <person name="Lupp C."/>
            <person name="McCann J."/>
            <person name="Millikan D."/>
            <person name="Schaefer A."/>
            <person name="Stabb E."/>
            <person name="Stevens A."/>
            <person name="Visick K."/>
            <person name="Whistler C."/>
            <person name="Greenberg E.P."/>
        </authorList>
    </citation>
    <scope>NUCLEOTIDE SEQUENCE [LARGE SCALE GENOMIC DNA]</scope>
    <source>
        <strain>ATCC 700601 / ES114</strain>
    </source>
</reference>
<evidence type="ECO:0000255" key="1">
    <source>
        <dbReference type="HAMAP-Rule" id="MF_01346"/>
    </source>
</evidence>
<feature type="chain" id="PRO_0000238394" description="ATP synthase subunit alpha">
    <location>
        <begin position="1"/>
        <end position="513"/>
    </location>
</feature>
<feature type="binding site" evidence="1">
    <location>
        <begin position="169"/>
        <end position="176"/>
    </location>
    <ligand>
        <name>ATP</name>
        <dbReference type="ChEBI" id="CHEBI:30616"/>
    </ligand>
</feature>
<feature type="site" description="Required for activity" evidence="1">
    <location>
        <position position="373"/>
    </location>
</feature>
<dbReference type="EC" id="7.1.2.2" evidence="1"/>
<dbReference type="EMBL" id="CP000020">
    <property type="protein sequence ID" value="AAW87061.1"/>
    <property type="molecule type" value="Genomic_DNA"/>
</dbReference>
<dbReference type="RefSeq" id="WP_005421589.1">
    <property type="nucleotide sequence ID" value="NZ_CAWLES010000001.1"/>
</dbReference>
<dbReference type="RefSeq" id="YP_205949.1">
    <property type="nucleotide sequence ID" value="NC_006840.2"/>
</dbReference>
<dbReference type="SMR" id="Q5E1N5"/>
<dbReference type="STRING" id="312309.VF_2566"/>
<dbReference type="EnsemblBacteria" id="AAW87061">
    <property type="protein sequence ID" value="AAW87061"/>
    <property type="gene ID" value="VF_2566"/>
</dbReference>
<dbReference type="GeneID" id="54165316"/>
<dbReference type="KEGG" id="vfi:VF_2566"/>
<dbReference type="PATRIC" id="fig|312309.11.peg.2593"/>
<dbReference type="eggNOG" id="COG0056">
    <property type="taxonomic scope" value="Bacteria"/>
</dbReference>
<dbReference type="HOGENOM" id="CLU_010091_2_1_6"/>
<dbReference type="OrthoDB" id="9803053at2"/>
<dbReference type="Proteomes" id="UP000000537">
    <property type="component" value="Chromosome I"/>
</dbReference>
<dbReference type="GO" id="GO:0005886">
    <property type="term" value="C:plasma membrane"/>
    <property type="evidence" value="ECO:0007669"/>
    <property type="project" value="UniProtKB-SubCell"/>
</dbReference>
<dbReference type="GO" id="GO:0045259">
    <property type="term" value="C:proton-transporting ATP synthase complex"/>
    <property type="evidence" value="ECO:0007669"/>
    <property type="project" value="UniProtKB-KW"/>
</dbReference>
<dbReference type="GO" id="GO:0043531">
    <property type="term" value="F:ADP binding"/>
    <property type="evidence" value="ECO:0007669"/>
    <property type="project" value="TreeGrafter"/>
</dbReference>
<dbReference type="GO" id="GO:0005524">
    <property type="term" value="F:ATP binding"/>
    <property type="evidence" value="ECO:0007669"/>
    <property type="project" value="UniProtKB-UniRule"/>
</dbReference>
<dbReference type="GO" id="GO:0046933">
    <property type="term" value="F:proton-transporting ATP synthase activity, rotational mechanism"/>
    <property type="evidence" value="ECO:0007669"/>
    <property type="project" value="UniProtKB-UniRule"/>
</dbReference>
<dbReference type="CDD" id="cd18113">
    <property type="entry name" value="ATP-synt_F1_alpha_C"/>
    <property type="match status" value="1"/>
</dbReference>
<dbReference type="CDD" id="cd18116">
    <property type="entry name" value="ATP-synt_F1_alpha_N"/>
    <property type="match status" value="1"/>
</dbReference>
<dbReference type="CDD" id="cd01132">
    <property type="entry name" value="F1-ATPase_alpha_CD"/>
    <property type="match status" value="1"/>
</dbReference>
<dbReference type="FunFam" id="1.20.150.20:FF:000001">
    <property type="entry name" value="ATP synthase subunit alpha"/>
    <property type="match status" value="1"/>
</dbReference>
<dbReference type="FunFam" id="2.40.30.20:FF:000001">
    <property type="entry name" value="ATP synthase subunit alpha"/>
    <property type="match status" value="1"/>
</dbReference>
<dbReference type="FunFam" id="3.40.50.300:FF:000002">
    <property type="entry name" value="ATP synthase subunit alpha"/>
    <property type="match status" value="1"/>
</dbReference>
<dbReference type="Gene3D" id="2.40.30.20">
    <property type="match status" value="1"/>
</dbReference>
<dbReference type="Gene3D" id="1.20.150.20">
    <property type="entry name" value="ATP synthase alpha/beta chain, C-terminal domain"/>
    <property type="match status" value="1"/>
</dbReference>
<dbReference type="Gene3D" id="3.40.50.300">
    <property type="entry name" value="P-loop containing nucleotide triphosphate hydrolases"/>
    <property type="match status" value="1"/>
</dbReference>
<dbReference type="HAMAP" id="MF_01346">
    <property type="entry name" value="ATP_synth_alpha_bact"/>
    <property type="match status" value="1"/>
</dbReference>
<dbReference type="InterPro" id="IPR023366">
    <property type="entry name" value="ATP_synth_asu-like_sf"/>
</dbReference>
<dbReference type="InterPro" id="IPR000793">
    <property type="entry name" value="ATP_synth_asu_C"/>
</dbReference>
<dbReference type="InterPro" id="IPR038376">
    <property type="entry name" value="ATP_synth_asu_C_sf"/>
</dbReference>
<dbReference type="InterPro" id="IPR033732">
    <property type="entry name" value="ATP_synth_F1_a_nt-bd_dom"/>
</dbReference>
<dbReference type="InterPro" id="IPR005294">
    <property type="entry name" value="ATP_synth_F1_asu"/>
</dbReference>
<dbReference type="InterPro" id="IPR020003">
    <property type="entry name" value="ATPase_a/bsu_AS"/>
</dbReference>
<dbReference type="InterPro" id="IPR004100">
    <property type="entry name" value="ATPase_F1/V1/A1_a/bsu_N"/>
</dbReference>
<dbReference type="InterPro" id="IPR036121">
    <property type="entry name" value="ATPase_F1/V1/A1_a/bsu_N_sf"/>
</dbReference>
<dbReference type="InterPro" id="IPR000194">
    <property type="entry name" value="ATPase_F1/V1/A1_a/bsu_nucl-bd"/>
</dbReference>
<dbReference type="InterPro" id="IPR027417">
    <property type="entry name" value="P-loop_NTPase"/>
</dbReference>
<dbReference type="NCBIfam" id="TIGR00962">
    <property type="entry name" value="atpA"/>
    <property type="match status" value="1"/>
</dbReference>
<dbReference type="NCBIfam" id="NF009884">
    <property type="entry name" value="PRK13343.1"/>
    <property type="match status" value="1"/>
</dbReference>
<dbReference type="PANTHER" id="PTHR48082">
    <property type="entry name" value="ATP SYNTHASE SUBUNIT ALPHA, MITOCHONDRIAL"/>
    <property type="match status" value="1"/>
</dbReference>
<dbReference type="PANTHER" id="PTHR48082:SF2">
    <property type="entry name" value="ATP SYNTHASE SUBUNIT ALPHA, MITOCHONDRIAL"/>
    <property type="match status" value="1"/>
</dbReference>
<dbReference type="Pfam" id="PF00006">
    <property type="entry name" value="ATP-synt_ab"/>
    <property type="match status" value="1"/>
</dbReference>
<dbReference type="Pfam" id="PF00306">
    <property type="entry name" value="ATP-synt_ab_C"/>
    <property type="match status" value="1"/>
</dbReference>
<dbReference type="Pfam" id="PF02874">
    <property type="entry name" value="ATP-synt_ab_N"/>
    <property type="match status" value="1"/>
</dbReference>
<dbReference type="SUPFAM" id="SSF47917">
    <property type="entry name" value="C-terminal domain of alpha and beta subunits of F1 ATP synthase"/>
    <property type="match status" value="1"/>
</dbReference>
<dbReference type="SUPFAM" id="SSF50615">
    <property type="entry name" value="N-terminal domain of alpha and beta subunits of F1 ATP synthase"/>
    <property type="match status" value="1"/>
</dbReference>
<dbReference type="SUPFAM" id="SSF52540">
    <property type="entry name" value="P-loop containing nucleoside triphosphate hydrolases"/>
    <property type="match status" value="1"/>
</dbReference>
<dbReference type="PROSITE" id="PS00152">
    <property type="entry name" value="ATPASE_ALPHA_BETA"/>
    <property type="match status" value="1"/>
</dbReference>
<proteinExistence type="inferred from homology"/>
<organism>
    <name type="scientific">Aliivibrio fischeri (strain ATCC 700601 / ES114)</name>
    <name type="common">Vibrio fischeri</name>
    <dbReference type="NCBI Taxonomy" id="312309"/>
    <lineage>
        <taxon>Bacteria</taxon>
        <taxon>Pseudomonadati</taxon>
        <taxon>Pseudomonadota</taxon>
        <taxon>Gammaproteobacteria</taxon>
        <taxon>Vibrionales</taxon>
        <taxon>Vibrionaceae</taxon>
        <taxon>Aliivibrio</taxon>
    </lineage>
</organism>
<accession>Q5E1N5</accession>